<keyword id="KW-0044">Antibiotic</keyword>
<keyword id="KW-0929">Antimicrobial</keyword>
<keyword id="KW-1015">Disulfide bond</keyword>
<keyword id="KW-0964">Secreted</keyword>
<keyword id="KW-0732">Signal</keyword>
<keyword id="KW-0800">Toxin</keyword>
<evidence type="ECO:0000250" key="1"/>
<evidence type="ECO:0000255" key="2"/>
<evidence type="ECO:0000305" key="3"/>
<dbReference type="EMBL" id="EU926122">
    <property type="protein sequence ID" value="ACI41454.1"/>
    <property type="molecule type" value="mRNA"/>
</dbReference>
<dbReference type="EMBL" id="FM864126">
    <property type="protein sequence ID" value="CAS03723.1"/>
    <property type="molecule type" value="mRNA"/>
</dbReference>
<dbReference type="SMR" id="B6DD38"/>
<dbReference type="ArachnoServer" id="AS001057">
    <property type="toxin name" value="U14-lycotoxin-Ls1a"/>
</dbReference>
<dbReference type="GO" id="GO:0005576">
    <property type="term" value="C:extracellular region"/>
    <property type="evidence" value="ECO:0007669"/>
    <property type="project" value="UniProtKB-SubCell"/>
</dbReference>
<dbReference type="GO" id="GO:0090729">
    <property type="term" value="F:toxin activity"/>
    <property type="evidence" value="ECO:0007669"/>
    <property type="project" value="UniProtKB-KW"/>
</dbReference>
<dbReference type="GO" id="GO:0042742">
    <property type="term" value="P:defense response to bacterium"/>
    <property type="evidence" value="ECO:0007669"/>
    <property type="project" value="UniProtKB-KW"/>
</dbReference>
<dbReference type="InterPro" id="IPR036645">
    <property type="entry name" value="Elafin-like_sf"/>
</dbReference>
<dbReference type="SUPFAM" id="SSF57256">
    <property type="entry name" value="Elafin-like"/>
    <property type="match status" value="1"/>
</dbReference>
<accession>B6DD38</accession>
<reference key="1">
    <citation type="journal article" date="2010" name="Zoology">
        <title>Transcriptome analysis of the venom glands of the Chinese wolf spider Lycosa singoriensis.</title>
        <authorList>
            <person name="Zhang Y."/>
            <person name="Chen J."/>
            <person name="Tang X."/>
            <person name="Wang F."/>
            <person name="Jiang L."/>
            <person name="Xiong X."/>
            <person name="Wang M."/>
            <person name="Rong M."/>
            <person name="Liu Z."/>
            <person name="Liang S."/>
        </authorList>
    </citation>
    <scope>NUCLEOTIDE SEQUENCE [LARGE SCALE MRNA]</scope>
    <source>
        <tissue>Venom gland</tissue>
    </source>
</reference>
<name>TXE05_LYCSI</name>
<sequence length="87" mass="9635">MNSKVFAVLLLLALLTCVLSEKYCPTPRNTSCKKMNIRNNCCRDSDCTSNAFCCAEPCGNFCHKASDKPGGRRVDPNASCQTGYVYW</sequence>
<protein>
    <recommendedName>
        <fullName>U14-lycotoxin-Ls1a</fullName>
    </recommendedName>
    <alternativeName>
        <fullName>Toxin-like structure LSTX-N5</fullName>
    </alternativeName>
</protein>
<feature type="signal peptide" evidence="2">
    <location>
        <begin position="1"/>
        <end position="20"/>
    </location>
</feature>
<feature type="chain" id="PRO_0000401881" description="U14-lycotoxin-Ls1a">
    <location>
        <begin position="21"/>
        <end position="87"/>
    </location>
</feature>
<feature type="domain" description="WAP">
    <location>
        <begin position="21"/>
        <end position="66"/>
    </location>
</feature>
<feature type="disulfide bond" evidence="1">
    <location>
        <begin position="24"/>
        <end position="54"/>
    </location>
</feature>
<feature type="disulfide bond" evidence="1">
    <location>
        <begin position="32"/>
        <end position="58"/>
    </location>
</feature>
<feature type="disulfide bond" evidence="1">
    <location>
        <begin position="41"/>
        <end position="53"/>
    </location>
</feature>
<feature type="disulfide bond" evidence="3">
    <location>
        <begin position="42"/>
        <end position="80"/>
    </location>
</feature>
<feature type="disulfide bond" evidence="1">
    <location>
        <begin position="47"/>
        <end position="62"/>
    </location>
</feature>
<organism>
    <name type="scientific">Lycosa singoriensis</name>
    <name type="common">Wolf spider</name>
    <name type="synonym">Aranea singoriensis</name>
    <dbReference type="NCBI Taxonomy" id="434756"/>
    <lineage>
        <taxon>Eukaryota</taxon>
        <taxon>Metazoa</taxon>
        <taxon>Ecdysozoa</taxon>
        <taxon>Arthropoda</taxon>
        <taxon>Chelicerata</taxon>
        <taxon>Arachnida</taxon>
        <taxon>Araneae</taxon>
        <taxon>Araneomorphae</taxon>
        <taxon>Entelegynae</taxon>
        <taxon>Lycosoidea</taxon>
        <taxon>Lycosidae</taxon>
        <taxon>Lycosa</taxon>
    </lineage>
</organism>
<comment type="function">
    <text evidence="1">Has antibacterial activity.</text>
</comment>
<comment type="subcellular location">
    <subcellularLocation>
        <location evidence="1">Secreted</location>
    </subcellularLocation>
</comment>
<comment type="tissue specificity">
    <text>Expressed by the venom gland.</text>
</comment>
<comment type="PTM">
    <text evidence="3">Contains 5 disulfide bonds.</text>
</comment>
<comment type="similarity">
    <text evidence="3">Belongs to the venom protein 11 family. 01 (wap-1) subfamily.</text>
</comment>
<proteinExistence type="evidence at transcript level"/>